<name>Y206_METKA</name>
<keyword id="KW-1185">Reference proteome</keyword>
<reference key="1">
    <citation type="journal article" date="2002" name="Proc. Natl. Acad. Sci. U.S.A.">
        <title>The complete genome of hyperthermophile Methanopyrus kandleri AV19 and monophyly of archaeal methanogens.</title>
        <authorList>
            <person name="Slesarev A.I."/>
            <person name="Mezhevaya K.V."/>
            <person name="Makarova K.S."/>
            <person name="Polushin N.N."/>
            <person name="Shcherbinina O.V."/>
            <person name="Shakhova V.V."/>
            <person name="Belova G.I."/>
            <person name="Aravind L."/>
            <person name="Natale D.A."/>
            <person name="Rogozin I.B."/>
            <person name="Tatusov R.L."/>
            <person name="Wolf Y.I."/>
            <person name="Stetter K.O."/>
            <person name="Malykh A.G."/>
            <person name="Koonin E.V."/>
            <person name="Kozyavkin S.A."/>
        </authorList>
    </citation>
    <scope>NUCLEOTIDE SEQUENCE [LARGE SCALE GENOMIC DNA]</scope>
    <source>
        <strain>AV19 / DSM 6324 / JCM 9639 / NBRC 100938</strain>
    </source>
</reference>
<gene>
    <name type="ordered locus">MK0206</name>
</gene>
<organism>
    <name type="scientific">Methanopyrus kandleri (strain AV19 / DSM 6324 / JCM 9639 / NBRC 100938)</name>
    <dbReference type="NCBI Taxonomy" id="190192"/>
    <lineage>
        <taxon>Archaea</taxon>
        <taxon>Methanobacteriati</taxon>
        <taxon>Methanobacteriota</taxon>
        <taxon>Methanomada group</taxon>
        <taxon>Methanopyri</taxon>
        <taxon>Methanopyrales</taxon>
        <taxon>Methanopyraceae</taxon>
        <taxon>Methanopyrus</taxon>
    </lineage>
</organism>
<evidence type="ECO:0000255" key="1">
    <source>
        <dbReference type="HAMAP-Rule" id="MF_01079"/>
    </source>
</evidence>
<proteinExistence type="inferred from homology"/>
<comment type="similarity">
    <text evidence="1">Belongs to the UPF0280 family.</text>
</comment>
<dbReference type="EMBL" id="AE009439">
    <property type="protein sequence ID" value="AAM01423.1"/>
    <property type="molecule type" value="Genomic_DNA"/>
</dbReference>
<dbReference type="SMR" id="Q8TYT6"/>
<dbReference type="STRING" id="190192.MK0206"/>
<dbReference type="PaxDb" id="190192-MK0206"/>
<dbReference type="EnsemblBacteria" id="AAM01423">
    <property type="protein sequence ID" value="AAM01423"/>
    <property type="gene ID" value="MK0206"/>
</dbReference>
<dbReference type="KEGG" id="mka:MK0206"/>
<dbReference type="HOGENOM" id="CLU_074757_0_0_2"/>
<dbReference type="InParanoid" id="Q8TYT6"/>
<dbReference type="OrthoDB" id="50299at2157"/>
<dbReference type="Proteomes" id="UP000001826">
    <property type="component" value="Chromosome"/>
</dbReference>
<dbReference type="Gene3D" id="3.10.520.10">
    <property type="entry name" value="ApbE-like domains"/>
    <property type="match status" value="1"/>
</dbReference>
<dbReference type="HAMAP" id="MF_01079">
    <property type="entry name" value="UPF0280"/>
    <property type="match status" value="1"/>
</dbReference>
<dbReference type="InterPro" id="IPR003374">
    <property type="entry name" value="ApbE-like_sf"/>
</dbReference>
<dbReference type="InterPro" id="IPR037456">
    <property type="entry name" value="MA1715-like"/>
</dbReference>
<dbReference type="InterPro" id="IPR007183">
    <property type="entry name" value="UPF0280"/>
</dbReference>
<dbReference type="NCBIfam" id="NF003321">
    <property type="entry name" value="PRK04334.1-1"/>
    <property type="match status" value="1"/>
</dbReference>
<dbReference type="PIRSF" id="PIRSF006421">
    <property type="entry name" value="UCP006421"/>
    <property type="match status" value="1"/>
</dbReference>
<dbReference type="SUPFAM" id="SSF143631">
    <property type="entry name" value="ApbE-like"/>
    <property type="match status" value="1"/>
</dbReference>
<sequence>MYSMRVVIEETDVTIRADSKESVSSAAKAVKLHRSELDRYVAKDPAFVTAKVPVRTLEGAPEVAKLMSRAAEPFGVGPMAAVAGAIAELAARASEPTVIVDNGGDVQVRARRSVVVGLYVSDDHPLSGRIGFEIEGVLGVCTSSGKFGHSYSAGKADAVTVFAERASLADAAATAICNLTSGDDPEAAVQRALEFADDFTGDLIEAAVVIRGDFVGISGRPPKIVSLRGGRIKPARLEPTI</sequence>
<protein>
    <recommendedName>
        <fullName evidence="1">UPF0280 protein MK0206</fullName>
    </recommendedName>
</protein>
<accession>Q8TYT6</accession>
<feature type="chain" id="PRO_0000140487" description="UPF0280 protein MK0206">
    <location>
        <begin position="1"/>
        <end position="241"/>
    </location>
</feature>